<feature type="chain" id="PRO_1000047563" description="Glutamate racemase">
    <location>
        <begin position="1"/>
        <end position="285"/>
    </location>
</feature>
<feature type="active site" description="Proton donor/acceptor" evidence="1">
    <location>
        <position position="92"/>
    </location>
</feature>
<feature type="active site" description="Proton donor/acceptor" evidence="1">
    <location>
        <position position="204"/>
    </location>
</feature>
<feature type="binding site" evidence="1">
    <location>
        <begin position="28"/>
        <end position="29"/>
    </location>
    <ligand>
        <name>substrate</name>
    </ligand>
</feature>
<feature type="binding site" evidence="1">
    <location>
        <begin position="60"/>
        <end position="61"/>
    </location>
    <ligand>
        <name>substrate</name>
    </ligand>
</feature>
<feature type="binding site" evidence="1">
    <location>
        <begin position="93"/>
        <end position="94"/>
    </location>
    <ligand>
        <name>substrate</name>
    </ligand>
</feature>
<feature type="binding site" evidence="1">
    <location>
        <begin position="205"/>
        <end position="206"/>
    </location>
    <ligand>
        <name>substrate</name>
    </ligand>
</feature>
<reference key="1">
    <citation type="journal article" date="2006" name="Proc. Natl. Acad. Sci. U.S.A.">
        <title>Identification of genes subject to positive selection in uropathogenic strains of Escherichia coli: a comparative genomics approach.</title>
        <authorList>
            <person name="Chen S.L."/>
            <person name="Hung C.-S."/>
            <person name="Xu J."/>
            <person name="Reigstad C.S."/>
            <person name="Magrini V."/>
            <person name="Sabo A."/>
            <person name="Blasiar D."/>
            <person name="Bieri T."/>
            <person name="Meyer R.R."/>
            <person name="Ozersky P."/>
            <person name="Armstrong J.R."/>
            <person name="Fulton R.S."/>
            <person name="Latreille J.P."/>
            <person name="Spieth J."/>
            <person name="Hooton T.M."/>
            <person name="Mardis E.R."/>
            <person name="Hultgren S.J."/>
            <person name="Gordon J.I."/>
        </authorList>
    </citation>
    <scope>NUCLEOTIDE SEQUENCE [LARGE SCALE GENOMIC DNA]</scope>
    <source>
        <strain>UTI89 / UPEC</strain>
    </source>
</reference>
<proteinExistence type="inferred from homology"/>
<keyword id="KW-0133">Cell shape</keyword>
<keyword id="KW-0961">Cell wall biogenesis/degradation</keyword>
<keyword id="KW-0413">Isomerase</keyword>
<keyword id="KW-0573">Peptidoglycan synthesis</keyword>
<organism>
    <name type="scientific">Escherichia coli (strain UTI89 / UPEC)</name>
    <dbReference type="NCBI Taxonomy" id="364106"/>
    <lineage>
        <taxon>Bacteria</taxon>
        <taxon>Pseudomonadati</taxon>
        <taxon>Pseudomonadota</taxon>
        <taxon>Gammaproteobacteria</taxon>
        <taxon>Enterobacterales</taxon>
        <taxon>Enterobacteriaceae</taxon>
        <taxon>Escherichia</taxon>
    </lineage>
</organism>
<accession>Q1R3U0</accession>
<name>MURI_ECOUT</name>
<gene>
    <name evidence="1" type="primary">murI</name>
    <name type="ordered locus">UTI89_C4562</name>
</gene>
<evidence type="ECO:0000255" key="1">
    <source>
        <dbReference type="HAMAP-Rule" id="MF_00258"/>
    </source>
</evidence>
<sequence>MATKLQDGNTPCLAATPSEPRPTVLVFDSGVGGLSVYDEIRHLLPDLHYIYAFDNVAFPYGEKSEVFIVERVVEIVTAVQERYPLALAVVACNTASTVSLPALREKFDFPVVGVVPAIKPAARLTANGIVGLLATRGTVKRSYTHELIARFANECQIEMLGSAEMVELAEAKLHGEDVSLDALKRILRPWLRMKEPPDTVVLGCTHFPLLQEELLQVLPEGTRLVDSGAAIARRTAWLLEHEAPDAKSADANIAFCMAMTPEAEQLLPVLQRYGFETLEKLAVLG</sequence>
<comment type="function">
    <text evidence="1">Provides the (R)-glutamate required for cell wall biosynthesis.</text>
</comment>
<comment type="catalytic activity">
    <reaction evidence="1">
        <text>L-glutamate = D-glutamate</text>
        <dbReference type="Rhea" id="RHEA:12813"/>
        <dbReference type="ChEBI" id="CHEBI:29985"/>
        <dbReference type="ChEBI" id="CHEBI:29986"/>
        <dbReference type="EC" id="5.1.1.3"/>
    </reaction>
</comment>
<comment type="pathway">
    <text evidence="1">Cell wall biogenesis; peptidoglycan biosynthesis.</text>
</comment>
<comment type="similarity">
    <text evidence="1">Belongs to the aspartate/glutamate racemases family.</text>
</comment>
<protein>
    <recommendedName>
        <fullName evidence="1">Glutamate racemase</fullName>
        <ecNumber evidence="1">5.1.1.3</ecNumber>
    </recommendedName>
</protein>
<dbReference type="EC" id="5.1.1.3" evidence="1"/>
<dbReference type="EMBL" id="CP000243">
    <property type="protein sequence ID" value="ABE09974.1"/>
    <property type="molecule type" value="Genomic_DNA"/>
</dbReference>
<dbReference type="RefSeq" id="WP_000201829.1">
    <property type="nucleotide sequence ID" value="NZ_CP064825.1"/>
</dbReference>
<dbReference type="SMR" id="Q1R3U0"/>
<dbReference type="KEGG" id="eci:UTI89_C4562"/>
<dbReference type="HOGENOM" id="CLU_052344_2_0_6"/>
<dbReference type="UniPathway" id="UPA00219"/>
<dbReference type="Proteomes" id="UP000001952">
    <property type="component" value="Chromosome"/>
</dbReference>
<dbReference type="GO" id="GO:0008881">
    <property type="term" value="F:glutamate racemase activity"/>
    <property type="evidence" value="ECO:0007669"/>
    <property type="project" value="UniProtKB-UniRule"/>
</dbReference>
<dbReference type="GO" id="GO:0071555">
    <property type="term" value="P:cell wall organization"/>
    <property type="evidence" value="ECO:0007669"/>
    <property type="project" value="UniProtKB-KW"/>
</dbReference>
<dbReference type="GO" id="GO:0009252">
    <property type="term" value="P:peptidoglycan biosynthetic process"/>
    <property type="evidence" value="ECO:0007669"/>
    <property type="project" value="UniProtKB-UniRule"/>
</dbReference>
<dbReference type="GO" id="GO:0008360">
    <property type="term" value="P:regulation of cell shape"/>
    <property type="evidence" value="ECO:0007669"/>
    <property type="project" value="UniProtKB-KW"/>
</dbReference>
<dbReference type="FunFam" id="3.40.50.1860:FF:000002">
    <property type="entry name" value="Glutamate racemase"/>
    <property type="match status" value="1"/>
</dbReference>
<dbReference type="Gene3D" id="3.40.50.1860">
    <property type="match status" value="2"/>
</dbReference>
<dbReference type="HAMAP" id="MF_00258">
    <property type="entry name" value="Glu_racemase"/>
    <property type="match status" value="1"/>
</dbReference>
<dbReference type="InterPro" id="IPR015942">
    <property type="entry name" value="Asp/Glu/hydantoin_racemase"/>
</dbReference>
<dbReference type="InterPro" id="IPR001920">
    <property type="entry name" value="Asp/Glu_race"/>
</dbReference>
<dbReference type="InterPro" id="IPR018187">
    <property type="entry name" value="Asp/Glu_racemase_AS_1"/>
</dbReference>
<dbReference type="InterPro" id="IPR033134">
    <property type="entry name" value="Asp/Glu_racemase_AS_2"/>
</dbReference>
<dbReference type="InterPro" id="IPR004391">
    <property type="entry name" value="Glu_race"/>
</dbReference>
<dbReference type="NCBIfam" id="TIGR00067">
    <property type="entry name" value="glut_race"/>
    <property type="match status" value="1"/>
</dbReference>
<dbReference type="NCBIfam" id="NF002034">
    <property type="entry name" value="PRK00865.1-1"/>
    <property type="match status" value="1"/>
</dbReference>
<dbReference type="PANTHER" id="PTHR21198">
    <property type="entry name" value="GLUTAMATE RACEMASE"/>
    <property type="match status" value="1"/>
</dbReference>
<dbReference type="PANTHER" id="PTHR21198:SF2">
    <property type="entry name" value="GLUTAMATE RACEMASE"/>
    <property type="match status" value="1"/>
</dbReference>
<dbReference type="Pfam" id="PF01177">
    <property type="entry name" value="Asp_Glu_race"/>
    <property type="match status" value="1"/>
</dbReference>
<dbReference type="SUPFAM" id="SSF53681">
    <property type="entry name" value="Aspartate/glutamate racemase"/>
    <property type="match status" value="2"/>
</dbReference>
<dbReference type="PROSITE" id="PS00923">
    <property type="entry name" value="ASP_GLU_RACEMASE_1"/>
    <property type="match status" value="1"/>
</dbReference>
<dbReference type="PROSITE" id="PS00924">
    <property type="entry name" value="ASP_GLU_RACEMASE_2"/>
    <property type="match status" value="1"/>
</dbReference>